<evidence type="ECO:0000250" key="1"/>
<evidence type="ECO:0000255" key="2"/>
<evidence type="ECO:0000255" key="3">
    <source>
        <dbReference type="PROSITE-ProRule" id="PRU00114"/>
    </source>
</evidence>
<evidence type="ECO:0000256" key="4">
    <source>
        <dbReference type="SAM" id="MobiDB-lite"/>
    </source>
</evidence>
<evidence type="ECO:0000269" key="5">
    <source>
    </source>
</evidence>
<evidence type="ECO:0000269" key="6">
    <source>
    </source>
</evidence>
<evidence type="ECO:0000305" key="7"/>
<proteinExistence type="evidence at protein level"/>
<sequence>MEGSWRDVLAVLVILAQLTVSGSSYQIIEGPRNVTALKGSEARFNCTVTHGWKLIMWALNGIVELSLTSQKPIITSNRFTSASYNSTDSFISEMIIHNVQLNDSGPVQCSLQNSNVFGFAFLSVQVMGTLNIPSSNLIVTEGEPCNVTCYAVGWTPLPNISWELEVPVSHSSYYSFLEPGNSLRVLSVLDLTPLGNGTLTCVAEMKDLQASESLTVNLTVVQPPPDSIGGEGQALPTWAIILLAVAFSLLLILIIALIIIFCCCCVSRREKEESTYQNEIRKSANVRTGKADPETWLKSGKENYGYKSDEARAAQIASLPPKSGEVSLPEQRSSLPQQELDKHRPSPVTHPRVSFDIASPQKIRNVTIV</sequence>
<gene>
    <name type="primary">Igsf5</name>
    <name type="synonym">Jam4</name>
</gene>
<accession>Q5VJ70</accession>
<feature type="signal peptide" evidence="2">
    <location>
        <begin position="1"/>
        <end position="24"/>
    </location>
</feature>
<feature type="chain" id="PRO_0000316297" description="Immunoglobulin superfamily member 5">
    <location>
        <begin position="25"/>
        <end position="369"/>
    </location>
</feature>
<feature type="topological domain" description="Extracellular" evidence="2">
    <location>
        <begin position="25"/>
        <end position="239"/>
    </location>
</feature>
<feature type="transmembrane region" description="Helical" evidence="2">
    <location>
        <begin position="240"/>
        <end position="260"/>
    </location>
</feature>
<feature type="topological domain" description="Cytoplasmic" evidence="2">
    <location>
        <begin position="261"/>
        <end position="369"/>
    </location>
</feature>
<feature type="domain" description="Ig-like V-type 1">
    <location>
        <begin position="25"/>
        <end position="125"/>
    </location>
</feature>
<feature type="domain" description="Ig-like V-type 2">
    <location>
        <begin position="128"/>
        <end position="217"/>
    </location>
</feature>
<feature type="region of interest" description="Disordered" evidence="4">
    <location>
        <begin position="321"/>
        <end position="354"/>
    </location>
</feature>
<feature type="glycosylation site" description="N-linked (GlcNAc...) asparagine" evidence="2">
    <location>
        <position position="33"/>
    </location>
</feature>
<feature type="glycosylation site" description="N-linked (GlcNAc...) asparagine" evidence="2">
    <location>
        <position position="45"/>
    </location>
</feature>
<feature type="glycosylation site" description="N-linked (GlcNAc...) asparagine" evidence="2">
    <location>
        <position position="146"/>
    </location>
</feature>
<feature type="glycosylation site" description="N-linked (GlcNAc...) asparagine" evidence="2">
    <location>
        <position position="196"/>
    </location>
</feature>
<feature type="glycosylation site" description="N-linked (GlcNAc...) asparagine" evidence="2">
    <location>
        <position position="217"/>
    </location>
</feature>
<feature type="disulfide bond" evidence="3">
    <location>
        <begin position="46"/>
        <end position="109"/>
    </location>
</feature>
<feature type="disulfide bond" evidence="3">
    <location>
        <begin position="149"/>
        <end position="201"/>
    </location>
</feature>
<keyword id="KW-0965">Cell junction</keyword>
<keyword id="KW-1003">Cell membrane</keyword>
<keyword id="KW-1015">Disulfide bond</keyword>
<keyword id="KW-0325">Glycoprotein</keyword>
<keyword id="KW-0393">Immunoglobulin domain</keyword>
<keyword id="KW-0472">Membrane</keyword>
<keyword id="KW-1185">Reference proteome</keyword>
<keyword id="KW-0677">Repeat</keyword>
<keyword id="KW-0732">Signal</keyword>
<keyword id="KW-0796">Tight junction</keyword>
<keyword id="KW-0812">Transmembrane</keyword>
<keyword id="KW-1133">Transmembrane helix</keyword>
<comment type="function">
    <text evidence="1">Provides, together with MAGI1, an adhesion machinery at tight junctions, which may regulate the permeability of kidney glomerulus and small intestinal epithelial cells. Mediates calcium-independent homophilic cell adhesion. In testis, it may function as a cell adhesion molecule rather than a tight-junction protein. It may participate in the adhesion between spermatogonia-spermatogonia, spermatogonia-Sertoli cells, and Sertoli cells-Sertoli cells (By similarity).</text>
</comment>
<comment type="subunit">
    <text evidence="1">Interacts with MAGI1 at tight junctions, forms a tripartite complex with NPHS1. Interacts with LNX1 isoform 2 via its PDZ 2 domain, it may also interact with other isoforms containing this domain (By similarity).</text>
</comment>
<comment type="subcellular location">
    <subcellularLocation>
        <location evidence="5 6">Apical cell membrane</location>
        <topology evidence="2">Single-pass type I membrane protein</topology>
    </subcellularLocation>
    <subcellularLocation>
        <location evidence="5">Cell junction</location>
        <location evidence="5">Tight junction</location>
    </subcellularLocation>
    <text evidence="5 6">In podocytes, it is mainly found in the apical plasma membrane where no junctional structure is seen. The subcellular location is altered in puromycin amino-nucleoside nephropathy (PAN). A cytoplasmic localization has been observed which may indicate the existence of variants lacking a signal sequence (PubMed:16118391). May be primarily targeted to apical membranes and subsequently recruited to tight-junctions (PubMed:12940823).</text>
</comment>
<comment type="tissue specificity">
    <text evidence="6">In kidney, it is found in glomeruli and in the proximal tubules (at protein level).</text>
</comment>
<comment type="developmental stage">
    <text evidence="6">Found at all stages of developing glomeruli and the presumptive proximal tubules in the embryonic kidney. The expression was restricted to the presumptive podocyte.</text>
</comment>
<comment type="miscellaneous">
    <text>It may be a useful marker for injured podocytes in puromycin amino-nucleoside nephropathy (PAN) since its expression at the apical surface is altered.</text>
</comment>
<comment type="similarity">
    <text evidence="7">Belongs to the immunoglobulin superfamily.</text>
</comment>
<protein>
    <recommendedName>
        <fullName>Immunoglobulin superfamily member 5</fullName>
        <shortName>IgSF5</shortName>
    </recommendedName>
    <alternativeName>
        <fullName>Junctional adhesion molecule 4</fullName>
        <shortName>JAM-4</shortName>
    </alternativeName>
</protein>
<name>IGSF5_RAT</name>
<reference key="1">
    <citation type="journal article" date="2006" name="Am. J. Physiol.">
        <title>Altered expression of junctional adhesion molecule 4 in injured podocytes.</title>
        <authorList>
            <person name="Harita Y."/>
            <person name="Miyauchi N."/>
            <person name="Karasawa T."/>
            <person name="Suzuki K."/>
            <person name="Han G.D."/>
            <person name="Koike H."/>
            <person name="Igarashi T."/>
            <person name="Shimizu F."/>
            <person name="Kawachi H."/>
        </authorList>
    </citation>
    <scope>NUCLEOTIDE SEQUENCE [MRNA]</scope>
    <scope>TISSUE SPECIFICITY</scope>
    <scope>SUBCELLULAR LOCATION</scope>
    <scope>DEVELOPMENTAL STAGE</scope>
    <scope>MISCELLANEOUS</scope>
    <source>
        <strain>Wistar</strain>
    </source>
</reference>
<reference key="2">
    <citation type="journal article" date="2004" name="Genome Res.">
        <title>The status, quality, and expansion of the NIH full-length cDNA project: the Mammalian Gene Collection (MGC).</title>
        <authorList>
            <consortium name="The MGC Project Team"/>
        </authorList>
    </citation>
    <scope>NUCLEOTIDE SEQUENCE [LARGE SCALE MRNA]</scope>
    <source>
        <tissue>Liver</tissue>
    </source>
</reference>
<reference key="3">
    <citation type="journal article" date="2003" name="Genes Cells">
        <title>Roles of immunoglobulin-like loops of junctional cell adhesion molecule 4; involvement in the subcellular localization and the cell adhesion.</title>
        <authorList>
            <person name="Tajima M."/>
            <person name="Hirabayashi S."/>
            <person name="Yao I."/>
            <person name="Shirasawa M."/>
            <person name="Osuga J."/>
            <person name="Ishibashi S."/>
            <person name="Fujita T."/>
            <person name="Hata Y."/>
        </authorList>
    </citation>
    <scope>SUBCELLULAR LOCATION</scope>
</reference>
<reference key="4">
    <citation type="journal article" date="2005" name="Lab. Invest.">
        <title>MAGI-1 is a component of the glomerular slit diaphragm that is tightly associated with nephrin.</title>
        <authorList>
            <person name="Hirabayashi S."/>
            <person name="Mori H."/>
            <person name="Kansaku A."/>
            <person name="Kurihara H."/>
            <person name="Sakai T."/>
            <person name="Shimizu F."/>
            <person name="Kawachi H."/>
            <person name="Hata Y."/>
        </authorList>
    </citation>
    <scope>INTERACTION WITH MAGI1</scope>
</reference>
<dbReference type="EMBL" id="AY439284">
    <property type="protein sequence ID" value="AAR99701.1"/>
    <property type="molecule type" value="mRNA"/>
</dbReference>
<dbReference type="EMBL" id="BC097947">
    <property type="protein sequence ID" value="AAH97947.1"/>
    <property type="molecule type" value="mRNA"/>
</dbReference>
<dbReference type="RefSeq" id="NP_001006991.1">
    <property type="nucleotide sequence ID" value="NM_001006990.2"/>
</dbReference>
<dbReference type="RefSeq" id="XP_006248217.1">
    <property type="nucleotide sequence ID" value="XM_006248155.5"/>
</dbReference>
<dbReference type="SMR" id="Q5VJ70"/>
<dbReference type="BioGRID" id="257737">
    <property type="interactions" value="1"/>
</dbReference>
<dbReference type="CORUM" id="Q5VJ70"/>
<dbReference type="FunCoup" id="Q5VJ70">
    <property type="interactions" value="157"/>
</dbReference>
<dbReference type="STRING" id="10116.ENSRNOP00000032595"/>
<dbReference type="GlyCosmos" id="Q5VJ70">
    <property type="glycosylation" value="5 sites, No reported glycans"/>
</dbReference>
<dbReference type="GlyGen" id="Q5VJ70">
    <property type="glycosylation" value="5 sites"/>
</dbReference>
<dbReference type="iPTMnet" id="Q5VJ70"/>
<dbReference type="PhosphoSitePlus" id="Q5VJ70"/>
<dbReference type="PaxDb" id="10116-ENSRNOP00000032595"/>
<dbReference type="Ensembl" id="ENSRNOT00000032566.7">
    <property type="protein sequence ID" value="ENSRNOP00000032595.4"/>
    <property type="gene ID" value="ENSRNOG00000028216.7"/>
</dbReference>
<dbReference type="GeneID" id="304000"/>
<dbReference type="KEGG" id="rno:304000"/>
<dbReference type="UCSC" id="RGD:1359642">
    <property type="organism name" value="rat"/>
</dbReference>
<dbReference type="AGR" id="RGD:1359642"/>
<dbReference type="CTD" id="150084"/>
<dbReference type="RGD" id="1359642">
    <property type="gene designation" value="Igsf5"/>
</dbReference>
<dbReference type="eggNOG" id="ENOG502S38D">
    <property type="taxonomic scope" value="Eukaryota"/>
</dbReference>
<dbReference type="GeneTree" id="ENSGT00940000163238"/>
<dbReference type="InParanoid" id="Q5VJ70"/>
<dbReference type="OrthoDB" id="57450at9989"/>
<dbReference type="PhylomeDB" id="Q5VJ70"/>
<dbReference type="TreeFam" id="TF335729"/>
<dbReference type="PRO" id="PR:Q5VJ70"/>
<dbReference type="Proteomes" id="UP000002494">
    <property type="component" value="Chromosome 11"/>
</dbReference>
<dbReference type="Bgee" id="ENSRNOG00000028216">
    <property type="expression patterns" value="Expressed in liver and 12 other cell types or tissues"/>
</dbReference>
<dbReference type="ExpressionAtlas" id="Q5VJ70">
    <property type="expression patterns" value="baseline and differential"/>
</dbReference>
<dbReference type="GO" id="GO:0016324">
    <property type="term" value="C:apical plasma membrane"/>
    <property type="evidence" value="ECO:0007669"/>
    <property type="project" value="UniProtKB-SubCell"/>
</dbReference>
<dbReference type="GO" id="GO:0005923">
    <property type="term" value="C:bicellular tight junction"/>
    <property type="evidence" value="ECO:0000266"/>
    <property type="project" value="RGD"/>
</dbReference>
<dbReference type="GO" id="GO:0009986">
    <property type="term" value="C:cell surface"/>
    <property type="evidence" value="ECO:0000266"/>
    <property type="project" value="RGD"/>
</dbReference>
<dbReference type="GO" id="GO:0030165">
    <property type="term" value="F:PDZ domain binding"/>
    <property type="evidence" value="ECO:0000266"/>
    <property type="project" value="RGD"/>
</dbReference>
<dbReference type="GO" id="GO:0098609">
    <property type="term" value="P:cell-cell adhesion"/>
    <property type="evidence" value="ECO:0000266"/>
    <property type="project" value="RGD"/>
</dbReference>
<dbReference type="FunFam" id="2.60.40.10:FF:001503">
    <property type="entry name" value="Immunoglobulin superfamily member 5"/>
    <property type="match status" value="1"/>
</dbReference>
<dbReference type="FunFam" id="2.60.40.10:FF:001261">
    <property type="entry name" value="immunoglobulin superfamily member 5"/>
    <property type="match status" value="1"/>
</dbReference>
<dbReference type="Gene3D" id="2.60.40.10">
    <property type="entry name" value="Immunoglobulins"/>
    <property type="match status" value="2"/>
</dbReference>
<dbReference type="InterPro" id="IPR007110">
    <property type="entry name" value="Ig-like_dom"/>
</dbReference>
<dbReference type="InterPro" id="IPR036179">
    <property type="entry name" value="Ig-like_dom_sf"/>
</dbReference>
<dbReference type="InterPro" id="IPR013783">
    <property type="entry name" value="Ig-like_fold"/>
</dbReference>
<dbReference type="InterPro" id="IPR003599">
    <property type="entry name" value="Ig_sub"/>
</dbReference>
<dbReference type="PANTHER" id="PTHR44991">
    <property type="entry name" value="IMMUNOGLOBULIN SUPERFAMILY MEMBER 5"/>
    <property type="match status" value="1"/>
</dbReference>
<dbReference type="PANTHER" id="PTHR44991:SF1">
    <property type="entry name" value="IMMUNOGLOBULIN SUPERFAMILY MEMBER 5"/>
    <property type="match status" value="1"/>
</dbReference>
<dbReference type="SMART" id="SM00409">
    <property type="entry name" value="IG"/>
    <property type="match status" value="2"/>
</dbReference>
<dbReference type="SUPFAM" id="SSF48726">
    <property type="entry name" value="Immunoglobulin"/>
    <property type="match status" value="2"/>
</dbReference>
<dbReference type="PROSITE" id="PS50835">
    <property type="entry name" value="IG_LIKE"/>
    <property type="match status" value="2"/>
</dbReference>
<organism>
    <name type="scientific">Rattus norvegicus</name>
    <name type="common">Rat</name>
    <dbReference type="NCBI Taxonomy" id="10116"/>
    <lineage>
        <taxon>Eukaryota</taxon>
        <taxon>Metazoa</taxon>
        <taxon>Chordata</taxon>
        <taxon>Craniata</taxon>
        <taxon>Vertebrata</taxon>
        <taxon>Euteleostomi</taxon>
        <taxon>Mammalia</taxon>
        <taxon>Eutheria</taxon>
        <taxon>Euarchontoglires</taxon>
        <taxon>Glires</taxon>
        <taxon>Rodentia</taxon>
        <taxon>Myomorpha</taxon>
        <taxon>Muroidea</taxon>
        <taxon>Muridae</taxon>
        <taxon>Murinae</taxon>
        <taxon>Rattus</taxon>
    </lineage>
</organism>